<organism>
    <name type="scientific">Malacoplasma penetrans (strain HF-2)</name>
    <name type="common">Mycoplasma penetrans</name>
    <dbReference type="NCBI Taxonomy" id="272633"/>
    <lineage>
        <taxon>Bacteria</taxon>
        <taxon>Bacillati</taxon>
        <taxon>Mycoplasmatota</taxon>
        <taxon>Mycoplasmoidales</taxon>
        <taxon>Mycoplasmoidaceae</taxon>
        <taxon>Malacoplasma</taxon>
    </lineage>
</organism>
<keyword id="KW-0963">Cytoplasm</keyword>
<keyword id="KW-0489">Methyltransferase</keyword>
<keyword id="KW-0545">Nucleotide biosynthesis</keyword>
<keyword id="KW-1185">Reference proteome</keyword>
<keyword id="KW-0808">Transferase</keyword>
<proteinExistence type="inferred from homology"/>
<feature type="chain" id="PRO_0000140986" description="Thymidylate synthase">
    <location>
        <begin position="1"/>
        <end position="289"/>
    </location>
</feature>
<feature type="active site" description="Nucleophile" evidence="1">
    <location>
        <position position="170"/>
    </location>
</feature>
<feature type="binding site" description="in other chain" evidence="1">
    <location>
        <position position="21"/>
    </location>
    <ligand>
        <name>dUMP</name>
        <dbReference type="ChEBI" id="CHEBI:246422"/>
        <note>ligand shared between dimeric partners</note>
    </ligand>
</feature>
<feature type="binding site" evidence="1">
    <location>
        <begin position="150"/>
        <end position="151"/>
    </location>
    <ligand>
        <name>dUMP</name>
        <dbReference type="ChEBI" id="CHEBI:246422"/>
        <note>ligand shared between dimeric partners</note>
    </ligand>
</feature>
<feature type="binding site" description="in other chain" evidence="1">
    <location>
        <begin position="191"/>
        <end position="194"/>
    </location>
    <ligand>
        <name>dUMP</name>
        <dbReference type="ChEBI" id="CHEBI:246422"/>
        <note>ligand shared between dimeric partners</note>
    </ligand>
</feature>
<feature type="binding site" evidence="1">
    <location>
        <position position="194"/>
    </location>
    <ligand>
        <name>(6R)-5,10-methylene-5,6,7,8-tetrahydrofolate</name>
        <dbReference type="ChEBI" id="CHEBI:15636"/>
    </ligand>
</feature>
<feature type="binding site" description="in other chain" evidence="1">
    <location>
        <position position="202"/>
    </location>
    <ligand>
        <name>dUMP</name>
        <dbReference type="ChEBI" id="CHEBI:246422"/>
        <note>ligand shared between dimeric partners</note>
    </ligand>
</feature>
<feature type="binding site" description="in other chain" evidence="1">
    <location>
        <begin position="232"/>
        <end position="234"/>
    </location>
    <ligand>
        <name>dUMP</name>
        <dbReference type="ChEBI" id="CHEBI:246422"/>
        <note>ligand shared between dimeric partners</note>
    </ligand>
</feature>
<feature type="binding site" evidence="1">
    <location>
        <position position="288"/>
    </location>
    <ligand>
        <name>(6R)-5,10-methylene-5,6,7,8-tetrahydrofolate</name>
        <dbReference type="ChEBI" id="CHEBI:15636"/>
    </ligand>
</feature>
<accession>Q8EV81</accession>
<reference key="1">
    <citation type="journal article" date="2002" name="Nucleic Acids Res.">
        <title>The complete genomic sequence of Mycoplasma penetrans, an intracellular bacterial pathogen in humans.</title>
        <authorList>
            <person name="Sasaki Y."/>
            <person name="Ishikawa J."/>
            <person name="Yamashita A."/>
            <person name="Oshima K."/>
            <person name="Kenri T."/>
            <person name="Furuya K."/>
            <person name="Yoshino C."/>
            <person name="Horino A."/>
            <person name="Shiba T."/>
            <person name="Sasaki T."/>
            <person name="Hattori M."/>
        </authorList>
    </citation>
    <scope>NUCLEOTIDE SEQUENCE [LARGE SCALE GENOMIC DNA]</scope>
    <source>
        <strain>HF-2</strain>
    </source>
</reference>
<evidence type="ECO:0000255" key="1">
    <source>
        <dbReference type="HAMAP-Rule" id="MF_00008"/>
    </source>
</evidence>
<comment type="function">
    <text evidence="1">Catalyzes the reductive methylation of 2'-deoxyuridine-5'-monophosphate (dUMP) to 2'-deoxythymidine-5'-monophosphate (dTMP) while utilizing 5,10-methylenetetrahydrofolate (mTHF) as the methyl donor and reductant in the reaction, yielding dihydrofolate (DHF) as a by-product. This enzymatic reaction provides an intracellular de novo source of dTMP, an essential precursor for DNA biosynthesis.</text>
</comment>
<comment type="catalytic activity">
    <reaction evidence="1">
        <text>dUMP + (6R)-5,10-methylene-5,6,7,8-tetrahydrofolate = 7,8-dihydrofolate + dTMP</text>
        <dbReference type="Rhea" id="RHEA:12104"/>
        <dbReference type="ChEBI" id="CHEBI:15636"/>
        <dbReference type="ChEBI" id="CHEBI:57451"/>
        <dbReference type="ChEBI" id="CHEBI:63528"/>
        <dbReference type="ChEBI" id="CHEBI:246422"/>
        <dbReference type="EC" id="2.1.1.45"/>
    </reaction>
</comment>
<comment type="pathway">
    <text evidence="1">Pyrimidine metabolism; dTTP biosynthesis.</text>
</comment>
<comment type="subunit">
    <text evidence="1">Homodimer.</text>
</comment>
<comment type="subcellular location">
    <subcellularLocation>
        <location evidence="1">Cytoplasm</location>
    </subcellularLocation>
</comment>
<comment type="similarity">
    <text evidence="1">Belongs to the thymidylate synthase family. Bacterial-type ThyA subfamily.</text>
</comment>
<gene>
    <name evidence="1" type="primary">thyA</name>
    <name type="ordered locus">MYPE6870</name>
</gene>
<dbReference type="EC" id="2.1.1.45" evidence="1"/>
<dbReference type="EMBL" id="BA000026">
    <property type="protein sequence ID" value="BAC44479.1"/>
    <property type="molecule type" value="Genomic_DNA"/>
</dbReference>
<dbReference type="RefSeq" id="WP_011077509.1">
    <property type="nucleotide sequence ID" value="NC_004432.1"/>
</dbReference>
<dbReference type="SMR" id="Q8EV81"/>
<dbReference type="FunCoup" id="Q8EV81">
    <property type="interactions" value="167"/>
</dbReference>
<dbReference type="STRING" id="272633.gene:10731808"/>
<dbReference type="KEGG" id="mpe:MYPE6870"/>
<dbReference type="eggNOG" id="COG0207">
    <property type="taxonomic scope" value="Bacteria"/>
</dbReference>
<dbReference type="HOGENOM" id="CLU_021669_0_2_14"/>
<dbReference type="InParanoid" id="Q8EV81"/>
<dbReference type="UniPathway" id="UPA00575"/>
<dbReference type="Proteomes" id="UP000002522">
    <property type="component" value="Chromosome"/>
</dbReference>
<dbReference type="GO" id="GO:0005829">
    <property type="term" value="C:cytosol"/>
    <property type="evidence" value="ECO:0007669"/>
    <property type="project" value="TreeGrafter"/>
</dbReference>
<dbReference type="GO" id="GO:0004799">
    <property type="term" value="F:thymidylate synthase activity"/>
    <property type="evidence" value="ECO:0007669"/>
    <property type="project" value="UniProtKB-UniRule"/>
</dbReference>
<dbReference type="GO" id="GO:0006231">
    <property type="term" value="P:dTMP biosynthetic process"/>
    <property type="evidence" value="ECO:0007669"/>
    <property type="project" value="UniProtKB-UniRule"/>
</dbReference>
<dbReference type="GO" id="GO:0006235">
    <property type="term" value="P:dTTP biosynthetic process"/>
    <property type="evidence" value="ECO:0007669"/>
    <property type="project" value="UniProtKB-UniRule"/>
</dbReference>
<dbReference type="GO" id="GO:0032259">
    <property type="term" value="P:methylation"/>
    <property type="evidence" value="ECO:0007669"/>
    <property type="project" value="UniProtKB-KW"/>
</dbReference>
<dbReference type="CDD" id="cd00351">
    <property type="entry name" value="TS_Pyrimidine_HMase"/>
    <property type="match status" value="1"/>
</dbReference>
<dbReference type="Gene3D" id="3.30.572.10">
    <property type="entry name" value="Thymidylate synthase/dCMP hydroxymethylase domain"/>
    <property type="match status" value="1"/>
</dbReference>
<dbReference type="HAMAP" id="MF_00008">
    <property type="entry name" value="Thymidy_synth_bact"/>
    <property type="match status" value="1"/>
</dbReference>
<dbReference type="InterPro" id="IPR045097">
    <property type="entry name" value="Thymidate_synth/dCMP_Mease"/>
</dbReference>
<dbReference type="InterPro" id="IPR023451">
    <property type="entry name" value="Thymidate_synth/dCMP_Mease_dom"/>
</dbReference>
<dbReference type="InterPro" id="IPR036926">
    <property type="entry name" value="Thymidate_synth/dCMP_Mease_sf"/>
</dbReference>
<dbReference type="InterPro" id="IPR000398">
    <property type="entry name" value="Thymidylate_synthase"/>
</dbReference>
<dbReference type="InterPro" id="IPR020940">
    <property type="entry name" value="Thymidylate_synthase_AS"/>
</dbReference>
<dbReference type="NCBIfam" id="NF002496">
    <property type="entry name" value="PRK01827.1-2"/>
    <property type="match status" value="1"/>
</dbReference>
<dbReference type="NCBIfam" id="NF002497">
    <property type="entry name" value="PRK01827.1-3"/>
    <property type="match status" value="1"/>
</dbReference>
<dbReference type="NCBIfam" id="TIGR03284">
    <property type="entry name" value="thym_sym"/>
    <property type="match status" value="1"/>
</dbReference>
<dbReference type="PANTHER" id="PTHR11548:SF9">
    <property type="entry name" value="THYMIDYLATE SYNTHASE"/>
    <property type="match status" value="1"/>
</dbReference>
<dbReference type="PANTHER" id="PTHR11548">
    <property type="entry name" value="THYMIDYLATE SYNTHASE 1"/>
    <property type="match status" value="1"/>
</dbReference>
<dbReference type="Pfam" id="PF00303">
    <property type="entry name" value="Thymidylat_synt"/>
    <property type="match status" value="1"/>
</dbReference>
<dbReference type="PRINTS" id="PR00108">
    <property type="entry name" value="THYMDSNTHASE"/>
</dbReference>
<dbReference type="SUPFAM" id="SSF55831">
    <property type="entry name" value="Thymidylate synthase/dCMP hydroxymethylase"/>
    <property type="match status" value="1"/>
</dbReference>
<dbReference type="PROSITE" id="PS00091">
    <property type="entry name" value="THYMIDYLATE_SYNTHASE"/>
    <property type="match status" value="1"/>
</dbReference>
<name>TYSY_MALP2</name>
<protein>
    <recommendedName>
        <fullName evidence="1">Thymidylate synthase</fullName>
        <shortName evidence="1">TS</shortName>
        <shortName evidence="1">TSase</shortName>
        <ecNumber evidence="1">2.1.1.45</ecNumber>
    </recommendedName>
</protein>
<sequence length="289" mass="33890">MKEYKDLLKLVLDNGIMQENRTDTDAIAYFGTQSRYDLTKGFPLLTTKKMAYKAIFHELLWFLKGETNIKYLVDNNVKIWNEWPYENYKKSPYFKNESIDEFILKIKEDDSFAKQFGELGPVYGRQWRNFNGVDQITNLIEEIKKNKYSRRLIVSVWNPSEIKNMLLPPCHCLFQFFVNSKNELSCQLYQRSADLFLGVPFNIASYSLLTYMIAQVTNTTAKEFVHTIGVAHIYNNHIDQVKEQLTREPLQLPTLVLNKNIKNIFDFKIEDIEIKDYNSHPAIKGKVAV</sequence>